<proteinExistence type="evidence at protein level"/>
<evidence type="ECO:0000255" key="1"/>
<evidence type="ECO:0000303" key="2">
    <source ref="1"/>
</evidence>
<evidence type="ECO:0000305" key="3"/>
<gene>
    <name type="primary">KIAA2013</name>
</gene>
<accession>Q8IYS2</accession>
<accession>Q5JXC1</accession>
<accession>Q8IVF8</accession>
<accession>Q8NDI7</accession>
<accession>Q9BSY1</accession>
<comment type="interaction">
    <interactant intactId="EBI-2866116">
        <id>Q8IYS2</id>
    </interactant>
    <interactant intactId="EBI-720480">
        <id>P24593</id>
        <label>IGFBP5</label>
    </interactant>
    <organismsDiffer>false</organismsDiffer>
    <experiments>3</experiments>
</comment>
<comment type="interaction">
    <interactant intactId="EBI-2866116">
        <id>Q8IYS2</id>
    </interactant>
    <interactant intactId="EBI-2852148">
        <id>Q9H2L4</id>
        <label>TMEM60</label>
    </interactant>
    <organismsDiffer>false</organismsDiffer>
    <experiments>3</experiments>
</comment>
<comment type="subcellular location">
    <subcellularLocation>
        <location evidence="3">Membrane</location>
        <topology evidence="3">Single-pass type I membrane protein</topology>
    </subcellularLocation>
</comment>
<comment type="alternative products">
    <event type="alternative splicing"/>
    <isoform>
        <id>Q8IYS2-1</id>
        <name>1</name>
        <sequence type="displayed"/>
    </isoform>
    <isoform>
        <id>Q8IYS2-2</id>
        <name>2</name>
        <sequence type="described" ref="VSP_026487"/>
    </isoform>
</comment>
<comment type="sequence caution" evidence="3">
    <conflict type="erroneous initiation">
        <sequence resource="EMBL-CDS" id="BAC23109"/>
    </conflict>
</comment>
<reference key="1">
    <citation type="submission" date="2002-11" db="EMBL/GenBank/DDBJ databases">
        <title>The nucleotide sequence of a long cDNA clone isolated from human.</title>
        <authorList>
            <person name="Nagase T."/>
            <person name="Kikuno R."/>
            <person name="Ohara O."/>
        </authorList>
    </citation>
    <scope>NUCLEOTIDE SEQUENCE [LARGE SCALE MRNA] (ISOFORM 2)</scope>
    <source>
        <tissue>Brain</tissue>
    </source>
</reference>
<reference key="2">
    <citation type="journal article" date="2006" name="Nature">
        <title>The DNA sequence and biological annotation of human chromosome 1.</title>
        <authorList>
            <person name="Gregory S.G."/>
            <person name="Barlow K.F."/>
            <person name="McLay K.E."/>
            <person name="Kaul R."/>
            <person name="Swarbreck D."/>
            <person name="Dunham A."/>
            <person name="Scott C.E."/>
            <person name="Howe K.L."/>
            <person name="Woodfine K."/>
            <person name="Spencer C.C.A."/>
            <person name="Jones M.C."/>
            <person name="Gillson C."/>
            <person name="Searle S."/>
            <person name="Zhou Y."/>
            <person name="Kokocinski F."/>
            <person name="McDonald L."/>
            <person name="Evans R."/>
            <person name="Phillips K."/>
            <person name="Atkinson A."/>
            <person name="Cooper R."/>
            <person name="Jones C."/>
            <person name="Hall R.E."/>
            <person name="Andrews T.D."/>
            <person name="Lloyd C."/>
            <person name="Ainscough R."/>
            <person name="Almeida J.P."/>
            <person name="Ambrose K.D."/>
            <person name="Anderson F."/>
            <person name="Andrew R.W."/>
            <person name="Ashwell R.I.S."/>
            <person name="Aubin K."/>
            <person name="Babbage A.K."/>
            <person name="Bagguley C.L."/>
            <person name="Bailey J."/>
            <person name="Beasley H."/>
            <person name="Bethel G."/>
            <person name="Bird C.P."/>
            <person name="Bray-Allen S."/>
            <person name="Brown J.Y."/>
            <person name="Brown A.J."/>
            <person name="Buckley D."/>
            <person name="Burton J."/>
            <person name="Bye J."/>
            <person name="Carder C."/>
            <person name="Chapman J.C."/>
            <person name="Clark S.Y."/>
            <person name="Clarke G."/>
            <person name="Clee C."/>
            <person name="Cobley V."/>
            <person name="Collier R.E."/>
            <person name="Corby N."/>
            <person name="Coville G.J."/>
            <person name="Davies J."/>
            <person name="Deadman R."/>
            <person name="Dunn M."/>
            <person name="Earthrowl M."/>
            <person name="Ellington A.G."/>
            <person name="Errington H."/>
            <person name="Frankish A."/>
            <person name="Frankland J."/>
            <person name="French L."/>
            <person name="Garner P."/>
            <person name="Garnett J."/>
            <person name="Gay L."/>
            <person name="Ghori M.R.J."/>
            <person name="Gibson R."/>
            <person name="Gilby L.M."/>
            <person name="Gillett W."/>
            <person name="Glithero R.J."/>
            <person name="Grafham D.V."/>
            <person name="Griffiths C."/>
            <person name="Griffiths-Jones S."/>
            <person name="Grocock R."/>
            <person name="Hammond S."/>
            <person name="Harrison E.S.I."/>
            <person name="Hart E."/>
            <person name="Haugen E."/>
            <person name="Heath P.D."/>
            <person name="Holmes S."/>
            <person name="Holt K."/>
            <person name="Howden P.J."/>
            <person name="Hunt A.R."/>
            <person name="Hunt S.E."/>
            <person name="Hunter G."/>
            <person name="Isherwood J."/>
            <person name="James R."/>
            <person name="Johnson C."/>
            <person name="Johnson D."/>
            <person name="Joy A."/>
            <person name="Kay M."/>
            <person name="Kershaw J.K."/>
            <person name="Kibukawa M."/>
            <person name="Kimberley A.M."/>
            <person name="King A."/>
            <person name="Knights A.J."/>
            <person name="Lad H."/>
            <person name="Laird G."/>
            <person name="Lawlor S."/>
            <person name="Leongamornlert D.A."/>
            <person name="Lloyd D.M."/>
            <person name="Loveland J."/>
            <person name="Lovell J."/>
            <person name="Lush M.J."/>
            <person name="Lyne R."/>
            <person name="Martin S."/>
            <person name="Mashreghi-Mohammadi M."/>
            <person name="Matthews L."/>
            <person name="Matthews N.S.W."/>
            <person name="McLaren S."/>
            <person name="Milne S."/>
            <person name="Mistry S."/>
            <person name="Moore M.J.F."/>
            <person name="Nickerson T."/>
            <person name="O'Dell C.N."/>
            <person name="Oliver K."/>
            <person name="Palmeiri A."/>
            <person name="Palmer S.A."/>
            <person name="Parker A."/>
            <person name="Patel D."/>
            <person name="Pearce A.V."/>
            <person name="Peck A.I."/>
            <person name="Pelan S."/>
            <person name="Phelps K."/>
            <person name="Phillimore B.J."/>
            <person name="Plumb R."/>
            <person name="Rajan J."/>
            <person name="Raymond C."/>
            <person name="Rouse G."/>
            <person name="Saenphimmachak C."/>
            <person name="Sehra H.K."/>
            <person name="Sheridan E."/>
            <person name="Shownkeen R."/>
            <person name="Sims S."/>
            <person name="Skuce C.D."/>
            <person name="Smith M."/>
            <person name="Steward C."/>
            <person name="Subramanian S."/>
            <person name="Sycamore N."/>
            <person name="Tracey A."/>
            <person name="Tromans A."/>
            <person name="Van Helmond Z."/>
            <person name="Wall M."/>
            <person name="Wallis J.M."/>
            <person name="White S."/>
            <person name="Whitehead S.L."/>
            <person name="Wilkinson J.E."/>
            <person name="Willey D.L."/>
            <person name="Williams H."/>
            <person name="Wilming L."/>
            <person name="Wray P.W."/>
            <person name="Wu Z."/>
            <person name="Coulson A."/>
            <person name="Vaudin M."/>
            <person name="Sulston J.E."/>
            <person name="Durbin R.M."/>
            <person name="Hubbard T."/>
            <person name="Wooster R."/>
            <person name="Dunham I."/>
            <person name="Carter N.P."/>
            <person name="McVean G."/>
            <person name="Ross M.T."/>
            <person name="Harrow J."/>
            <person name="Olson M.V."/>
            <person name="Beck S."/>
            <person name="Rogers J."/>
            <person name="Bentley D.R."/>
        </authorList>
    </citation>
    <scope>NUCLEOTIDE SEQUENCE [LARGE SCALE GENOMIC DNA]</scope>
</reference>
<reference key="3">
    <citation type="journal article" date="2004" name="Genome Res.">
        <title>The status, quality, and expansion of the NIH full-length cDNA project: the Mammalian Gene Collection (MGC).</title>
        <authorList>
            <consortium name="The MGC Project Team"/>
        </authorList>
    </citation>
    <scope>NUCLEOTIDE SEQUENCE [LARGE SCALE MRNA] (ISOFORM 1)</scope>
    <source>
        <tissue>Brain</tissue>
        <tissue>Ovary</tissue>
    </source>
</reference>
<reference key="4">
    <citation type="journal article" date="2007" name="BMC Genomics">
        <title>The full-ORF clone resource of the German cDNA consortium.</title>
        <authorList>
            <person name="Bechtel S."/>
            <person name="Rosenfelder H."/>
            <person name="Duda A."/>
            <person name="Schmidt C.P."/>
            <person name="Ernst U."/>
            <person name="Wellenreuther R."/>
            <person name="Mehrle A."/>
            <person name="Schuster C."/>
            <person name="Bahr A."/>
            <person name="Bloecker H."/>
            <person name="Heubner D."/>
            <person name="Hoerlein A."/>
            <person name="Michel G."/>
            <person name="Wedler H."/>
            <person name="Koehrer K."/>
            <person name="Ottenwaelder B."/>
            <person name="Poustka A."/>
            <person name="Wiemann S."/>
            <person name="Schupp I."/>
        </authorList>
    </citation>
    <scope>NUCLEOTIDE SEQUENCE [LARGE SCALE MRNA] OF 349-634 (ISOFORM 1)</scope>
    <source>
        <tissue>Testis</tissue>
    </source>
</reference>
<reference key="5">
    <citation type="journal article" date="2015" name="Proteomics">
        <title>N-terminome analysis of the human mitochondrial proteome.</title>
        <authorList>
            <person name="Vaca Jacome A.S."/>
            <person name="Rabilloud T."/>
            <person name="Schaeffer-Reiss C."/>
            <person name="Rompais M."/>
            <person name="Ayoub D."/>
            <person name="Lane L."/>
            <person name="Bairoch A."/>
            <person name="Van Dorsselaer A."/>
            <person name="Carapito C."/>
        </authorList>
    </citation>
    <scope>IDENTIFICATION BY MASS SPECTROMETRY [LARGE SCALE ANALYSIS]</scope>
</reference>
<name>K2013_HUMAN</name>
<protein>
    <recommendedName>
        <fullName>Uncharacterized protein KIAA2013</fullName>
    </recommendedName>
</protein>
<keyword id="KW-0025">Alternative splicing</keyword>
<keyword id="KW-0325">Glycoprotein</keyword>
<keyword id="KW-0472">Membrane</keyword>
<keyword id="KW-1267">Proteomics identification</keyword>
<keyword id="KW-1185">Reference proteome</keyword>
<keyword id="KW-0732">Signal</keyword>
<keyword id="KW-0812">Transmembrane</keyword>
<keyword id="KW-1133">Transmembrane helix</keyword>
<feature type="signal peptide" evidence="1">
    <location>
        <begin position="1"/>
        <end position="40"/>
    </location>
</feature>
<feature type="chain" id="PRO_0000293468" description="Uncharacterized protein KIAA2013">
    <location>
        <begin position="41"/>
        <end position="634"/>
    </location>
</feature>
<feature type="topological domain" description="Extracellular" evidence="1">
    <location>
        <begin position="41"/>
        <end position="589"/>
    </location>
</feature>
<feature type="transmembrane region" description="Helical" evidence="1">
    <location>
        <begin position="590"/>
        <end position="610"/>
    </location>
</feature>
<feature type="topological domain" description="Cytoplasmic" evidence="1">
    <location>
        <begin position="611"/>
        <end position="634"/>
    </location>
</feature>
<feature type="glycosylation site" description="N-linked (GlcNAc...) asparagine" evidence="1">
    <location>
        <position position="363"/>
    </location>
</feature>
<feature type="splice variant" id="VSP_026487" description="In isoform 2." evidence="2">
    <original>EDPSV</original>
    <variation>VGSRHLVETRGLGLALSPVSRKGLAWRGGVRPGQEWVS</variation>
    <location>
        <begin position="630"/>
        <end position="634"/>
    </location>
</feature>
<sequence length="634" mass="69157">MWLQQRLKGLPGLLSSSWARRLLCLLGLLLLLLWFGGSGARRAAGGLHLLPWSRGEPGAAEPSACLEAATRAWRGLRERGEVVPLGPGVPALVANGFLALDVAANRLWVTPGEREPAVAPDFVPFVQLRPLSALAEAGEAVLLLREGLLRRVRCLQLGSPGPGPVAAGPGPASVSGLAAGSGRDCVLLQEDFLAHRGRPHVYLQRIQLNNPTERVAALQTVGPTAGPAPKAFTSTLEKVGDHQFLLYSGRSPPTPTGLVHLVVVAAKKLVNRLQVAPKTQLDETVLWVVHVSGPINPQVLKSKAAKELKALQDLARKEMLELLDMPAAELLQDHQLLWAQLFSPGVEMKKITDTHTPSGLTVNLTLYYMLSCSPAPLLSPSLSHRERDQMESTLNYEDHCFSGHATMHAENLWPGRLSSVQQILQLSDLWRLTLQKRGCKGLVKVGAPGILQGMVLSFGGLQFTENHLQFQADPDVLHNSYALHGIRYKNDHINLAVLADAEGKPYLHVSVESRGQPVKIYACKAGCLDEPVELTSAPTGHTFSVMVTQPITPLLYISTDLTHLQDLRHTLHLKAILAHDEHMAQQDPGLPFLFWFSVASLITLFHLFLFKLIYNEYCGPGAKPLFRSKEDPSV</sequence>
<organism>
    <name type="scientific">Homo sapiens</name>
    <name type="common">Human</name>
    <dbReference type="NCBI Taxonomy" id="9606"/>
    <lineage>
        <taxon>Eukaryota</taxon>
        <taxon>Metazoa</taxon>
        <taxon>Chordata</taxon>
        <taxon>Craniata</taxon>
        <taxon>Vertebrata</taxon>
        <taxon>Euteleostomi</taxon>
        <taxon>Mammalia</taxon>
        <taxon>Eutheria</taxon>
        <taxon>Euarchontoglires</taxon>
        <taxon>Primates</taxon>
        <taxon>Haplorrhini</taxon>
        <taxon>Catarrhini</taxon>
        <taxon>Hominidae</taxon>
        <taxon>Homo</taxon>
    </lineage>
</organism>
<dbReference type="EMBL" id="AB095933">
    <property type="protein sequence ID" value="BAC23109.1"/>
    <property type="status" value="ALT_INIT"/>
    <property type="molecule type" value="mRNA"/>
</dbReference>
<dbReference type="EMBL" id="AL096840">
    <property type="status" value="NOT_ANNOTATED_CDS"/>
    <property type="molecule type" value="Genomic_DNA"/>
</dbReference>
<dbReference type="EMBL" id="AL021155">
    <property type="status" value="NOT_ANNOTATED_CDS"/>
    <property type="molecule type" value="Genomic_DNA"/>
</dbReference>
<dbReference type="EMBL" id="BC004501">
    <property type="protein sequence ID" value="AAH04501.2"/>
    <property type="molecule type" value="mRNA"/>
</dbReference>
<dbReference type="EMBL" id="BC035033">
    <property type="protein sequence ID" value="AAH35033.1"/>
    <property type="molecule type" value="mRNA"/>
</dbReference>
<dbReference type="EMBL" id="AL833891">
    <property type="protein sequence ID" value="CAD38747.1"/>
    <property type="molecule type" value="mRNA"/>
</dbReference>
<dbReference type="CCDS" id="CCDS141.1">
    <molecule id="Q8IYS2-1"/>
</dbReference>
<dbReference type="RefSeq" id="NP_612355.1">
    <molecule id="Q8IYS2-1"/>
    <property type="nucleotide sequence ID" value="NM_138346.3"/>
</dbReference>
<dbReference type="RefSeq" id="XP_005263588.1">
    <property type="nucleotide sequence ID" value="XM_005263531.4"/>
</dbReference>
<dbReference type="BioGRID" id="124680">
    <property type="interactions" value="171"/>
</dbReference>
<dbReference type="FunCoup" id="Q8IYS2">
    <property type="interactions" value="1281"/>
</dbReference>
<dbReference type="IntAct" id="Q8IYS2">
    <property type="interactions" value="109"/>
</dbReference>
<dbReference type="MINT" id="Q8IYS2"/>
<dbReference type="STRING" id="9606.ENSP00000365756"/>
<dbReference type="GlyCosmos" id="Q8IYS2">
    <property type="glycosylation" value="1 site, No reported glycans"/>
</dbReference>
<dbReference type="GlyGen" id="Q8IYS2">
    <property type="glycosylation" value="5 sites, 2 O-linked glycans (3 sites)"/>
</dbReference>
<dbReference type="iPTMnet" id="Q8IYS2"/>
<dbReference type="PhosphoSitePlus" id="Q8IYS2"/>
<dbReference type="SwissPalm" id="Q8IYS2"/>
<dbReference type="BioMuta" id="KIAA2013"/>
<dbReference type="DMDM" id="74750773"/>
<dbReference type="jPOST" id="Q8IYS2"/>
<dbReference type="MassIVE" id="Q8IYS2"/>
<dbReference type="PaxDb" id="9606-ENSP00000365756"/>
<dbReference type="PeptideAtlas" id="Q8IYS2"/>
<dbReference type="ProteomicsDB" id="71221">
    <molecule id="Q8IYS2-1"/>
</dbReference>
<dbReference type="ProteomicsDB" id="71222">
    <molecule id="Q8IYS2-2"/>
</dbReference>
<dbReference type="Pumba" id="Q8IYS2"/>
<dbReference type="Antibodypedia" id="65397">
    <property type="antibodies" value="32 antibodies from 9 providers"/>
</dbReference>
<dbReference type="DNASU" id="90231"/>
<dbReference type="Ensembl" id="ENST00000376572.8">
    <molecule id="Q8IYS2-1"/>
    <property type="protein sequence ID" value="ENSP00000365756.3"/>
    <property type="gene ID" value="ENSG00000116685.17"/>
</dbReference>
<dbReference type="Ensembl" id="ENST00000376576.3">
    <molecule id="Q8IYS2-2"/>
    <property type="protein sequence ID" value="ENSP00000365760.3"/>
    <property type="gene ID" value="ENSG00000116685.17"/>
</dbReference>
<dbReference type="GeneID" id="90231"/>
<dbReference type="KEGG" id="hsa:90231"/>
<dbReference type="MANE-Select" id="ENST00000376572.8">
    <property type="protein sequence ID" value="ENSP00000365756.3"/>
    <property type="RefSeq nucleotide sequence ID" value="NM_138346.3"/>
    <property type="RefSeq protein sequence ID" value="NP_612355.1"/>
</dbReference>
<dbReference type="UCSC" id="uc001atk.4">
    <molecule id="Q8IYS2-1"/>
    <property type="organism name" value="human"/>
</dbReference>
<dbReference type="AGR" id="HGNC:28513"/>
<dbReference type="CTD" id="90231"/>
<dbReference type="DisGeNET" id="90231"/>
<dbReference type="GeneCards" id="KIAA2013"/>
<dbReference type="HGNC" id="HGNC:28513">
    <property type="gene designation" value="KIAA2013"/>
</dbReference>
<dbReference type="HPA" id="ENSG00000116685">
    <property type="expression patterns" value="Low tissue specificity"/>
</dbReference>
<dbReference type="neXtProt" id="NX_Q8IYS2"/>
<dbReference type="OpenTargets" id="ENSG00000116685"/>
<dbReference type="PharmGKB" id="PA142671593"/>
<dbReference type="VEuPathDB" id="HostDB:ENSG00000116685"/>
<dbReference type="eggNOG" id="KOG3778">
    <property type="taxonomic scope" value="Eukaryota"/>
</dbReference>
<dbReference type="GeneTree" id="ENSGT00390000007643"/>
<dbReference type="HOGENOM" id="CLU_023338_0_0_1"/>
<dbReference type="InParanoid" id="Q8IYS2"/>
<dbReference type="OMA" id="LAEIHRW"/>
<dbReference type="OrthoDB" id="10017443at2759"/>
<dbReference type="PAN-GO" id="Q8IYS2">
    <property type="GO annotations" value="0 GO annotations based on evolutionary models"/>
</dbReference>
<dbReference type="PhylomeDB" id="Q8IYS2"/>
<dbReference type="TreeFam" id="TF314999"/>
<dbReference type="PathwayCommons" id="Q8IYS2"/>
<dbReference type="SignaLink" id="Q8IYS2"/>
<dbReference type="BioGRID-ORCS" id="90231">
    <property type="hits" value="46 hits in 1158 CRISPR screens"/>
</dbReference>
<dbReference type="ChiTaRS" id="KIAA2013">
    <property type="organism name" value="human"/>
</dbReference>
<dbReference type="GenomeRNAi" id="90231"/>
<dbReference type="Pharos" id="Q8IYS2">
    <property type="development level" value="Tdark"/>
</dbReference>
<dbReference type="PRO" id="PR:Q8IYS2"/>
<dbReference type="Proteomes" id="UP000005640">
    <property type="component" value="Chromosome 1"/>
</dbReference>
<dbReference type="RNAct" id="Q8IYS2">
    <property type="molecule type" value="protein"/>
</dbReference>
<dbReference type="Bgee" id="ENSG00000116685">
    <property type="expression patterns" value="Expressed in ileal mucosa and 191 other cell types or tissues"/>
</dbReference>
<dbReference type="GO" id="GO:0016020">
    <property type="term" value="C:membrane"/>
    <property type="evidence" value="ECO:0007005"/>
    <property type="project" value="UniProtKB"/>
</dbReference>
<dbReference type="InterPro" id="IPR018795">
    <property type="entry name" value="K2013-like"/>
</dbReference>
<dbReference type="PANTHER" id="PTHR31386:SF2">
    <property type="entry name" value="SIMILAR TO RIKEN CDNA 2510039O18"/>
    <property type="match status" value="1"/>
</dbReference>
<dbReference type="PANTHER" id="PTHR31386">
    <property type="entry name" value="UNCHARACTERIZED PROTEIN KIAA2013"/>
    <property type="match status" value="1"/>
</dbReference>
<dbReference type="Pfam" id="PF10222">
    <property type="entry name" value="DUF2152"/>
    <property type="match status" value="1"/>
</dbReference>